<sequence>MKASELQGKDQAALTKELNDLLKAQFGLRMQIATQQLNNTSQLKKVRRDIARVKTVMNQKDAK</sequence>
<comment type="similarity">
    <text evidence="1">Belongs to the universal ribosomal protein uL29 family.</text>
</comment>
<feature type="chain" id="PRO_1000007498" description="Large ribosomal subunit protein uL29">
    <location>
        <begin position="1"/>
        <end position="63"/>
    </location>
</feature>
<dbReference type="EMBL" id="CU207211">
    <property type="protein sequence ID" value="CAL63267.1"/>
    <property type="molecule type" value="Genomic_DNA"/>
</dbReference>
<dbReference type="SMR" id="A4G9T0"/>
<dbReference type="STRING" id="204773.HEAR3158"/>
<dbReference type="KEGG" id="har:HEAR3158"/>
<dbReference type="eggNOG" id="COG0255">
    <property type="taxonomic scope" value="Bacteria"/>
</dbReference>
<dbReference type="HOGENOM" id="CLU_158491_1_1_4"/>
<dbReference type="OrthoDB" id="9815192at2"/>
<dbReference type="Proteomes" id="UP000006697">
    <property type="component" value="Chromosome"/>
</dbReference>
<dbReference type="GO" id="GO:0022625">
    <property type="term" value="C:cytosolic large ribosomal subunit"/>
    <property type="evidence" value="ECO:0007669"/>
    <property type="project" value="TreeGrafter"/>
</dbReference>
<dbReference type="GO" id="GO:0003735">
    <property type="term" value="F:structural constituent of ribosome"/>
    <property type="evidence" value="ECO:0007669"/>
    <property type="project" value="InterPro"/>
</dbReference>
<dbReference type="GO" id="GO:0006412">
    <property type="term" value="P:translation"/>
    <property type="evidence" value="ECO:0007669"/>
    <property type="project" value="UniProtKB-UniRule"/>
</dbReference>
<dbReference type="CDD" id="cd00427">
    <property type="entry name" value="Ribosomal_L29_HIP"/>
    <property type="match status" value="1"/>
</dbReference>
<dbReference type="FunFam" id="1.10.287.310:FF:000001">
    <property type="entry name" value="50S ribosomal protein L29"/>
    <property type="match status" value="1"/>
</dbReference>
<dbReference type="Gene3D" id="1.10.287.310">
    <property type="match status" value="1"/>
</dbReference>
<dbReference type="HAMAP" id="MF_00374">
    <property type="entry name" value="Ribosomal_uL29"/>
    <property type="match status" value="1"/>
</dbReference>
<dbReference type="InterPro" id="IPR050063">
    <property type="entry name" value="Ribosomal_protein_uL29"/>
</dbReference>
<dbReference type="InterPro" id="IPR001854">
    <property type="entry name" value="Ribosomal_uL29"/>
</dbReference>
<dbReference type="InterPro" id="IPR018254">
    <property type="entry name" value="Ribosomal_uL29_CS"/>
</dbReference>
<dbReference type="InterPro" id="IPR036049">
    <property type="entry name" value="Ribosomal_uL29_sf"/>
</dbReference>
<dbReference type="NCBIfam" id="TIGR00012">
    <property type="entry name" value="L29"/>
    <property type="match status" value="1"/>
</dbReference>
<dbReference type="PANTHER" id="PTHR10916">
    <property type="entry name" value="60S RIBOSOMAL PROTEIN L35/50S RIBOSOMAL PROTEIN L29"/>
    <property type="match status" value="1"/>
</dbReference>
<dbReference type="PANTHER" id="PTHR10916:SF0">
    <property type="entry name" value="LARGE RIBOSOMAL SUBUNIT PROTEIN UL29C"/>
    <property type="match status" value="1"/>
</dbReference>
<dbReference type="Pfam" id="PF00831">
    <property type="entry name" value="Ribosomal_L29"/>
    <property type="match status" value="1"/>
</dbReference>
<dbReference type="SUPFAM" id="SSF46561">
    <property type="entry name" value="Ribosomal protein L29 (L29p)"/>
    <property type="match status" value="1"/>
</dbReference>
<dbReference type="PROSITE" id="PS00579">
    <property type="entry name" value="RIBOSOMAL_L29"/>
    <property type="match status" value="1"/>
</dbReference>
<name>RL29_HERAR</name>
<gene>
    <name evidence="1" type="primary">rpmC</name>
    <name type="ordered locus">HEAR3158</name>
</gene>
<reference key="1">
    <citation type="journal article" date="2007" name="PLoS Genet.">
        <title>A tale of two oxidation states: bacterial colonization of arsenic-rich environments.</title>
        <authorList>
            <person name="Muller D."/>
            <person name="Medigue C."/>
            <person name="Koechler S."/>
            <person name="Barbe V."/>
            <person name="Barakat M."/>
            <person name="Talla E."/>
            <person name="Bonnefoy V."/>
            <person name="Krin E."/>
            <person name="Arsene-Ploetze F."/>
            <person name="Carapito C."/>
            <person name="Chandler M."/>
            <person name="Cournoyer B."/>
            <person name="Cruveiller S."/>
            <person name="Dossat C."/>
            <person name="Duval S."/>
            <person name="Heymann M."/>
            <person name="Leize E."/>
            <person name="Lieutaud A."/>
            <person name="Lievremont D."/>
            <person name="Makita Y."/>
            <person name="Mangenot S."/>
            <person name="Nitschke W."/>
            <person name="Ortet P."/>
            <person name="Perdrial N."/>
            <person name="Schoepp B."/>
            <person name="Siguier P."/>
            <person name="Simeonova D.D."/>
            <person name="Rouy Z."/>
            <person name="Segurens B."/>
            <person name="Turlin E."/>
            <person name="Vallenet D."/>
            <person name="van Dorsselaer A."/>
            <person name="Weiss S."/>
            <person name="Weissenbach J."/>
            <person name="Lett M.-C."/>
            <person name="Danchin A."/>
            <person name="Bertin P.N."/>
        </authorList>
    </citation>
    <scope>NUCLEOTIDE SEQUENCE [LARGE SCALE GENOMIC DNA]</scope>
    <source>
        <strain>ULPAs1</strain>
    </source>
</reference>
<keyword id="KW-1185">Reference proteome</keyword>
<keyword id="KW-0687">Ribonucleoprotein</keyword>
<keyword id="KW-0689">Ribosomal protein</keyword>
<accession>A4G9T0</accession>
<proteinExistence type="inferred from homology"/>
<evidence type="ECO:0000255" key="1">
    <source>
        <dbReference type="HAMAP-Rule" id="MF_00374"/>
    </source>
</evidence>
<evidence type="ECO:0000305" key="2"/>
<organism>
    <name type="scientific">Herminiimonas arsenicoxydans</name>
    <dbReference type="NCBI Taxonomy" id="204773"/>
    <lineage>
        <taxon>Bacteria</taxon>
        <taxon>Pseudomonadati</taxon>
        <taxon>Pseudomonadota</taxon>
        <taxon>Betaproteobacteria</taxon>
        <taxon>Burkholderiales</taxon>
        <taxon>Oxalobacteraceae</taxon>
        <taxon>Herminiimonas</taxon>
    </lineage>
</organism>
<protein>
    <recommendedName>
        <fullName evidence="1">Large ribosomal subunit protein uL29</fullName>
    </recommendedName>
    <alternativeName>
        <fullName evidence="2">50S ribosomal protein L29</fullName>
    </alternativeName>
</protein>